<gene>
    <name type="ordered locus">BCG_0472</name>
</gene>
<name>GCS2_MYCBP</name>
<reference key="1">
    <citation type="journal article" date="2007" name="Proc. Natl. Acad. Sci. U.S.A.">
        <title>Genome plasticity of BCG and impact on vaccine efficacy.</title>
        <authorList>
            <person name="Brosch R."/>
            <person name="Gordon S.V."/>
            <person name="Garnier T."/>
            <person name="Eiglmeier K."/>
            <person name="Frigui W."/>
            <person name="Valenti P."/>
            <person name="Dos Santos S."/>
            <person name="Duthoy S."/>
            <person name="Lacroix C."/>
            <person name="Garcia-Pelayo C."/>
            <person name="Inwald J.K."/>
            <person name="Golby P."/>
            <person name="Garcia J.N."/>
            <person name="Hewinson R.G."/>
            <person name="Behr M.A."/>
            <person name="Quail M.A."/>
            <person name="Churcher C."/>
            <person name="Barrell B.G."/>
            <person name="Parkhill J."/>
            <person name="Cole S.T."/>
        </authorList>
    </citation>
    <scope>NUCLEOTIDE SEQUENCE [LARGE SCALE GENOMIC DNA]</scope>
    <source>
        <strain>BCG / Pasteur 1173P2</strain>
    </source>
</reference>
<evidence type="ECO:0000255" key="1">
    <source>
        <dbReference type="HAMAP-Rule" id="MF_01609"/>
    </source>
</evidence>
<proteinExistence type="inferred from homology"/>
<organism>
    <name type="scientific">Mycobacterium bovis (strain BCG / Pasteur 1173P2)</name>
    <dbReference type="NCBI Taxonomy" id="410289"/>
    <lineage>
        <taxon>Bacteria</taxon>
        <taxon>Bacillati</taxon>
        <taxon>Actinomycetota</taxon>
        <taxon>Actinomycetes</taxon>
        <taxon>Mycobacteriales</taxon>
        <taxon>Mycobacteriaceae</taxon>
        <taxon>Mycobacterium</taxon>
        <taxon>Mycobacterium tuberculosis complex</taxon>
    </lineage>
</organism>
<sequence>MPARRSAARIDFAGSPRPTLGVEWEFALVDSQTRDLSNEATAVIAEIGENPRVHKELLRNTVEIVSGICECTAEAMQDLRDTLGPARQIVRDRGMELFCAGTHPFARWSAQKLTDAPRYAELIKRTQWWGRQMLIWGVHVHVGIRSAHKVMPIMTSLLNYYPHLLALSASSPWWGGEDTGYASNRAMMFQQLPTAGLPFHFQRWAEFEGFVYDQKKTGIIDHMDEIRWDIRPSPHLGTLEVRICDGVSNLRELGALVALTHCLIVDLDRRLDAGETLPTMPPWHVQENKWRAARYGLDAVIILDADSNERLVTDDLADVLTRLEPVAKSLNCADELAAVSDIYRDGASYQRQLRVAQQHDGDLRAVVDALVAELVI</sequence>
<accession>A1KFQ5</accession>
<keyword id="KW-0067">ATP-binding</keyword>
<keyword id="KW-0436">Ligase</keyword>
<keyword id="KW-0547">Nucleotide-binding</keyword>
<feature type="chain" id="PRO_0000291494" description="Putative glutamate--cysteine ligase 2">
    <location>
        <begin position="1"/>
        <end position="376"/>
    </location>
</feature>
<comment type="function">
    <text evidence="1">ATP-dependent carboxylate-amine ligase which exhibits weak glutamate--cysteine ligase activity.</text>
</comment>
<comment type="catalytic activity">
    <reaction evidence="1">
        <text>L-cysteine + L-glutamate + ATP = gamma-L-glutamyl-L-cysteine + ADP + phosphate + H(+)</text>
        <dbReference type="Rhea" id="RHEA:13285"/>
        <dbReference type="ChEBI" id="CHEBI:15378"/>
        <dbReference type="ChEBI" id="CHEBI:29985"/>
        <dbReference type="ChEBI" id="CHEBI:30616"/>
        <dbReference type="ChEBI" id="CHEBI:35235"/>
        <dbReference type="ChEBI" id="CHEBI:43474"/>
        <dbReference type="ChEBI" id="CHEBI:58173"/>
        <dbReference type="ChEBI" id="CHEBI:456216"/>
        <dbReference type="EC" id="6.3.2.2"/>
    </reaction>
</comment>
<comment type="similarity">
    <text evidence="1">Belongs to the glutamate--cysteine ligase type 2 family. YbdK subfamily.</text>
</comment>
<dbReference type="EC" id="6.3.2.2" evidence="1"/>
<dbReference type="EMBL" id="AM408590">
    <property type="protein sequence ID" value="CAL70457.1"/>
    <property type="molecule type" value="Genomic_DNA"/>
</dbReference>
<dbReference type="RefSeq" id="WP_003900145.1">
    <property type="nucleotide sequence ID" value="NC_008769.1"/>
</dbReference>
<dbReference type="SMR" id="A1KFQ5"/>
<dbReference type="KEGG" id="mbb:BCG_0472"/>
<dbReference type="HOGENOM" id="CLU_044848_1_0_11"/>
<dbReference type="Proteomes" id="UP000001472">
    <property type="component" value="Chromosome"/>
</dbReference>
<dbReference type="GO" id="GO:0005524">
    <property type="term" value="F:ATP binding"/>
    <property type="evidence" value="ECO:0007669"/>
    <property type="project" value="UniProtKB-KW"/>
</dbReference>
<dbReference type="GO" id="GO:0004357">
    <property type="term" value="F:glutamate-cysteine ligase activity"/>
    <property type="evidence" value="ECO:0007669"/>
    <property type="project" value="UniProtKB-EC"/>
</dbReference>
<dbReference type="GO" id="GO:0042398">
    <property type="term" value="P:modified amino acid biosynthetic process"/>
    <property type="evidence" value="ECO:0007669"/>
    <property type="project" value="InterPro"/>
</dbReference>
<dbReference type="FunFam" id="3.30.590.20:FF:000004">
    <property type="entry name" value="Putative glutamate--cysteine ligase 2"/>
    <property type="match status" value="1"/>
</dbReference>
<dbReference type="Gene3D" id="3.30.590.20">
    <property type="match status" value="1"/>
</dbReference>
<dbReference type="HAMAP" id="MF_01609">
    <property type="entry name" value="Glu_cys_ligase_2"/>
    <property type="match status" value="1"/>
</dbReference>
<dbReference type="InterPro" id="IPR050141">
    <property type="entry name" value="GCL_type2/YbdK_subfam"/>
</dbReference>
<dbReference type="InterPro" id="IPR006336">
    <property type="entry name" value="GCS2"/>
</dbReference>
<dbReference type="InterPro" id="IPR014746">
    <property type="entry name" value="Gln_synth/guanido_kin_cat_dom"/>
</dbReference>
<dbReference type="InterPro" id="IPR011793">
    <property type="entry name" value="YbdK"/>
</dbReference>
<dbReference type="NCBIfam" id="TIGR02050">
    <property type="entry name" value="gshA_cyan_rel"/>
    <property type="match status" value="1"/>
</dbReference>
<dbReference type="NCBIfam" id="NF010042">
    <property type="entry name" value="PRK13517.1-2"/>
    <property type="match status" value="1"/>
</dbReference>
<dbReference type="NCBIfam" id="NF010043">
    <property type="entry name" value="PRK13517.1-3"/>
    <property type="match status" value="1"/>
</dbReference>
<dbReference type="NCBIfam" id="NF010044">
    <property type="entry name" value="PRK13517.1-4"/>
    <property type="match status" value="1"/>
</dbReference>
<dbReference type="PANTHER" id="PTHR36510">
    <property type="entry name" value="GLUTAMATE--CYSTEINE LIGASE 2-RELATED"/>
    <property type="match status" value="1"/>
</dbReference>
<dbReference type="PANTHER" id="PTHR36510:SF1">
    <property type="entry name" value="GLUTAMATE--CYSTEINE LIGASE 2-RELATED"/>
    <property type="match status" value="1"/>
</dbReference>
<dbReference type="Pfam" id="PF04107">
    <property type="entry name" value="GCS2"/>
    <property type="match status" value="1"/>
</dbReference>
<dbReference type="SUPFAM" id="SSF55931">
    <property type="entry name" value="Glutamine synthetase/guanido kinase"/>
    <property type="match status" value="1"/>
</dbReference>
<protein>
    <recommendedName>
        <fullName evidence="1">Putative glutamate--cysteine ligase 2</fullName>
        <ecNumber evidence="1">6.3.2.2</ecNumber>
    </recommendedName>
    <alternativeName>
        <fullName evidence="1">Gamma-glutamylcysteine synthetase 2</fullName>
        <shortName evidence="1">GCS 2</shortName>
        <shortName evidence="1">Gamma-GCS 2</shortName>
    </alternativeName>
</protein>